<geneLocation type="chloroplast"/>
<evidence type="ECO:0000255" key="1">
    <source>
        <dbReference type="HAMAP-Rule" id="MF_01330"/>
    </source>
</evidence>
<proteinExistence type="inferred from homology"/>
<comment type="function">
    <text evidence="1">Probable ATPase of unknown function. Its presence in a non-photosynthetic plant (Epifagus virginiana) and experiments in tobacco indicate that it has an essential function which is probably not related to photosynthesis.</text>
</comment>
<comment type="subcellular location">
    <subcellularLocation>
        <location evidence="1">Plastid</location>
        <location evidence="1">Chloroplast stroma</location>
    </subcellularLocation>
</comment>
<comment type="similarity">
    <text evidence="1">Belongs to the Ycf2 family.</text>
</comment>
<name>YCF2_PHAVU</name>
<organism>
    <name type="scientific">Phaseolus vulgaris</name>
    <name type="common">Kidney bean</name>
    <name type="synonym">French bean</name>
    <dbReference type="NCBI Taxonomy" id="3885"/>
    <lineage>
        <taxon>Eukaryota</taxon>
        <taxon>Viridiplantae</taxon>
        <taxon>Streptophyta</taxon>
        <taxon>Embryophyta</taxon>
        <taxon>Tracheophyta</taxon>
        <taxon>Spermatophyta</taxon>
        <taxon>Magnoliopsida</taxon>
        <taxon>eudicotyledons</taxon>
        <taxon>Gunneridae</taxon>
        <taxon>Pentapetalae</taxon>
        <taxon>rosids</taxon>
        <taxon>fabids</taxon>
        <taxon>Fabales</taxon>
        <taxon>Fabaceae</taxon>
        <taxon>Papilionoideae</taxon>
        <taxon>50 kb inversion clade</taxon>
        <taxon>NPAAA clade</taxon>
        <taxon>indigoferoid/millettioid clade</taxon>
        <taxon>Phaseoleae</taxon>
        <taxon>Phaseolus</taxon>
    </lineage>
</organism>
<keyword id="KW-0067">ATP-binding</keyword>
<keyword id="KW-0150">Chloroplast</keyword>
<keyword id="KW-0547">Nucleotide-binding</keyword>
<keyword id="KW-0934">Plastid</keyword>
<protein>
    <recommendedName>
        <fullName evidence="1">Protein Ycf2</fullName>
    </recommendedName>
</protein>
<sequence length="2288" mass="269467">MKGHQFKSWIFELREILKEIKNSRYFLDSWTQFNSAGFLIHIFFHQESFIKLLDSRIWSILLSRNSQGSTSNRYFTIKYVVLFVVAVLIYRINNRKMVERKNPYLTRLLPIPMNSIGPKNDTLEESSESSNINRLIVPLLYLPKGKKISESSFLDPKESTRVLPITKKYIMPEFNWGSRWWRNWIGKKSYSSCKISNETIAGIEISFKEKDIKYLEFLFVYYMDDPIRKDHDWEFFDRLSPRKRRNIINLNSGQLFEILVKDWIYYLMFAFREKIPKEVEGFFKQQGTGSIIQSNDIEHVSHLFLRNKRAISLQNCAQFHMWQFRQDLFVSWGKSPHESDFLRNMSQENWIWLDNVWLGNKDRFFSKVRNVSSNLQYDSTRSSFIQVTDSSQLKGSSDQSKDSFDSIRNEDSKYHTLINQREIQQLKERSILCWDPSFLQTERTEIESERFLKNLSGYSSMCRLFMEREKQMNNHLLPEEIEEFLGNPARATRSFFSDRWSELHLGSNPTDRSTRDQKLLKKEQKKHLALSRRSEKKEIVNLFKIIMYLQNTVSIHPISSYRGCDMVPKDELDSSNKISFLNKNPFWGFFHLFHDRNRGRYTLHHDFESEDLFQEMADLFTLSITEPDLVYHKEFDFSIDSSGLDQKHFLNELLNSRDESKKHSLLVLPPLFYEQNESFYRRIIKKWVQTSCGNNLEDPKPKIVVFASNNIMEAVNQYRLIRNLIQIQYSTHVYIRNVLNRFNCNFEYGIQRYQIGNDTLNHRTRMKYTINQHFSNLKKSQKKWFDPLILISRTERSMNWDPNAYRYKWSNGSKNFQEHLDYFISEQNSLQVVFDRLHINQYSIDWSEVIDKKDLSKSLCLFLSKLLLFLPKFLLFLSNSLPSFFFVSFGGISIHRSEIHIYELKGPNDPLCNQLLESIGLQIFHLKKRKPLLLDDQDTSQKSKFLINGGTISPFLFNKIPKWMIDSFHTRKNRRKSFDNTDSYFSMISHDPDNWLNPVKPFHRSSLIYYFYKANQLRFLNNQYHFCFYCNKRFPFYVEKARINNYDFTYGQFLKILFIRNKIFSFCDGQKKHAFLKRDTISPIELQVSNILIPNDFPQSGDEGYNFYKSFHFPIRYDPFVRGAIYSIADISGTPLTEGQIVHFEKTYCQPLSDMNIPDSEGKNLYQYLNFNSNMGWIHTPCSEKYLPSEKRKKRSSCLQKCLEKGQMYRTFQQDSVFSTLSKWNLFQTYIPWFLTSTGYKYLNFIFLDTFSDLLPILSSSQKFVSIFHDIMHGSDILWRIRQIPLCLPQWNLISEIPGNCFHNLLLSEEMTHRNNELLLISTHLRSLNVQEFFYSILFLLLVAGYLVRTHLLFVSRVYSELQTEFEKVKSLMIPSYMIELRKLLDRYPTSELNSFWLKNLFLVALEQLGDSLEEIRSFAFGGNMLWGGGPAYGVKSIRSKNKSWNLIDLISIIPNPINRIAFSRNTRHLSHPSKAIYSLIRKIKNVNGDWIDDQIESWVSNTDSIDDKEKEFLVQFSTLTTEKRIDQILLSLTHSDLLSKNNSGYQISEQPGAIYLRYLVDIHKKYLMIYEFNTSCLVERHIFLANYQTITYSQTLWGANSFHFPSHGKPFSLRLALPPPSRGILVIGSIGTGRSYLVKYLAKNSYVPFITVFLNKFLDNKPKGFLIDDSDDIDDSDDSDDIDRDLDIELELLTMMNTLTMDMMPEIDRFYITFHFELAKAMSPCIIWIPNIHDLDVNESNYLSLGLLVNYLSRDCERCSTRNILVIASTHIPQKVDPALIAPNQFNTCIKIRRLLIPQQRKHFFTLSYTRGFHLEKKMSHTNGFGSTTMGSNVRDLVALNNEALSISIIQKKSIIDTNIISSVLHRQTWDFRSQVRSVQDHGILFYQIGRAVSQNVLLSNCSIDPISIYMKKKSCDGGDSYLYKWYFELGTSMKKLTILLYLLSCSAGSVAQDLWSLPGPDEKNGITSYGLVENNSDLVHGLLEVEGALVGSSRTEKDCSQFDKDRVTLLLRSEPRNPLNRIQNGSYSIVDQRFLYEKYESEFEERGGVLDPQQIEEDFFNHIVWAPRIWRPWGFLFDCIERPNSLGFPYWARSFRDKRIIYDEEDELQENDSEFLQGGTMQYQTRDRSSKEQGFFRISQFIWDPADPLFFLFKDQPFVSVFSHRQFFTDEEMSRELLTSQTDLPTSIYKHWFIKNTQEKHFELLIHCQRWLRINSSSSKGFFPSNTLSESYQYLSNLFLSNEALLDQMTKTLLRKRWLFPDEIVVAICSNNESLVSLNHSKKKNR</sequence>
<feature type="chain" id="PRO_0000343788" description="Protein Ycf2">
    <location>
        <begin position="1"/>
        <end position="2288"/>
    </location>
</feature>
<feature type="binding site" evidence="1">
    <location>
        <begin position="1629"/>
        <end position="1636"/>
    </location>
    <ligand>
        <name>ATP</name>
        <dbReference type="ChEBI" id="CHEBI:30616"/>
    </ligand>
</feature>
<accession>A4GGE1</accession>
<gene>
    <name evidence="1" type="primary">ycf2-A</name>
</gene>
<gene>
    <name evidence="1" type="primary">ycf2-B</name>
</gene>
<dbReference type="EMBL" id="DQ886273">
    <property type="protein sequence ID" value="ABH88123.1"/>
    <property type="molecule type" value="Genomic_DNA"/>
</dbReference>
<dbReference type="EMBL" id="DQ886273">
    <property type="protein sequence ID" value="ABP58680.1"/>
    <property type="molecule type" value="Genomic_DNA"/>
</dbReference>
<dbReference type="EMBL" id="EU196765">
    <property type="protein sequence ID" value="ABW22807.1"/>
    <property type="molecule type" value="Genomic_DNA"/>
</dbReference>
<dbReference type="EMBL" id="EU196765">
    <property type="protein sequence ID" value="ABW22824.1"/>
    <property type="molecule type" value="Genomic_DNA"/>
</dbReference>
<dbReference type="KEGG" id="pvu:4961790"/>
<dbReference type="KEGG" id="pvu:5075294"/>
<dbReference type="eggNOG" id="ENOG502QRDV">
    <property type="taxonomic scope" value="Eukaryota"/>
</dbReference>
<dbReference type="GO" id="GO:0009570">
    <property type="term" value="C:chloroplast stroma"/>
    <property type="evidence" value="ECO:0007669"/>
    <property type="project" value="UniProtKB-SubCell"/>
</dbReference>
<dbReference type="GO" id="GO:0005524">
    <property type="term" value="F:ATP binding"/>
    <property type="evidence" value="ECO:0007669"/>
    <property type="project" value="UniProtKB-KW"/>
</dbReference>
<dbReference type="GO" id="GO:0016887">
    <property type="term" value="F:ATP hydrolysis activity"/>
    <property type="evidence" value="ECO:0007669"/>
    <property type="project" value="InterPro"/>
</dbReference>
<dbReference type="CDD" id="cd19505">
    <property type="entry name" value="RecA-like_Ycf2"/>
    <property type="match status" value="1"/>
</dbReference>
<dbReference type="Gene3D" id="3.40.50.300">
    <property type="entry name" value="P-loop containing nucleotide triphosphate hydrolases"/>
    <property type="match status" value="1"/>
</dbReference>
<dbReference type="HAMAP" id="MF_01330">
    <property type="entry name" value="Ycf2"/>
    <property type="match status" value="1"/>
</dbReference>
<dbReference type="InterPro" id="IPR003959">
    <property type="entry name" value="ATPase_AAA_core"/>
</dbReference>
<dbReference type="InterPro" id="IPR027417">
    <property type="entry name" value="P-loop_NTPase"/>
</dbReference>
<dbReference type="InterPro" id="IPR008543">
    <property type="entry name" value="Uncharacterised_Ycf2"/>
</dbReference>
<dbReference type="InterPro" id="IPR056777">
    <property type="entry name" value="Ycf2_N"/>
</dbReference>
<dbReference type="PANTHER" id="PTHR33078:SF51">
    <property type="entry name" value="PROTEIN TIC 214"/>
    <property type="match status" value="1"/>
</dbReference>
<dbReference type="PANTHER" id="PTHR33078">
    <property type="entry name" value="PROTEIN YCF2-RELATED"/>
    <property type="match status" value="1"/>
</dbReference>
<dbReference type="Pfam" id="PF00004">
    <property type="entry name" value="AAA"/>
    <property type="match status" value="1"/>
</dbReference>
<dbReference type="Pfam" id="PF05695">
    <property type="entry name" value="Ycf2"/>
    <property type="match status" value="1"/>
</dbReference>
<dbReference type="SUPFAM" id="SSF52540">
    <property type="entry name" value="P-loop containing nucleoside triphosphate hydrolases"/>
    <property type="match status" value="1"/>
</dbReference>
<reference key="1">
    <citation type="journal article" date="2007" name="BMC Genomics">
        <title>Rapid evolutionary change of common bean (Phaseolus vulgaris L) plastome, and the genomic diversification of legume chloroplasts.</title>
        <authorList>
            <person name="Guo X."/>
            <person name="Castillo-Ramirez S."/>
            <person name="Gonzalez V."/>
            <person name="Bustos P."/>
            <person name="Fernandez-Vazquez J.L."/>
            <person name="Santamaria R.I."/>
            <person name="Arellano J."/>
            <person name="Cevallos M.A."/>
            <person name="Davila G."/>
        </authorList>
    </citation>
    <scope>NUCLEOTIDE SEQUENCE [LARGE SCALE GENOMIC DNA]</scope>
    <source>
        <strain>cv. Negro Jamapa</strain>
    </source>
</reference>
<reference key="2">
    <citation type="submission" date="2007-10" db="EMBL/GenBank/DDBJ databases">
        <title>Complete nucleotide sequence of the plastid genome of the common bean, Phaseolus vulgaris.</title>
        <authorList>
            <person name="Moore M.J."/>
            <person name="Triplett E.W."/>
            <person name="Broughton W.J."/>
            <person name="Soltis P.S."/>
            <person name="Soltis D.E."/>
        </authorList>
    </citation>
    <scope>NUCLEOTIDE SEQUENCE [LARGE SCALE GENOMIC DNA]</scope>
</reference>